<evidence type="ECO:0000250" key="1"/>
<evidence type="ECO:0000250" key="2">
    <source>
        <dbReference type="UniProtKB" id="P15976"/>
    </source>
</evidence>
<evidence type="ECO:0000255" key="3">
    <source>
        <dbReference type="PROSITE-ProRule" id="PRU00094"/>
    </source>
</evidence>
<evidence type="ECO:0000256" key="4">
    <source>
        <dbReference type="SAM" id="MobiDB-lite"/>
    </source>
</evidence>
<evidence type="ECO:0000269" key="5">
    <source>
    </source>
</evidence>
<evidence type="ECO:0000305" key="6">
    <source>
    </source>
</evidence>
<evidence type="ECO:0007829" key="7">
    <source>
        <dbReference type="PDB" id="1GAT"/>
    </source>
</evidence>
<accession>P17678</accession>
<keyword id="KW-0002">3D-structure</keyword>
<keyword id="KW-0007">Acetylation</keyword>
<keyword id="KW-0010">Activator</keyword>
<keyword id="KW-0238">DNA-binding</keyword>
<keyword id="KW-0479">Metal-binding</keyword>
<keyword id="KW-0539">Nucleus</keyword>
<keyword id="KW-1185">Reference proteome</keyword>
<keyword id="KW-0677">Repeat</keyword>
<keyword id="KW-0678">Repressor</keyword>
<keyword id="KW-0804">Transcription</keyword>
<keyword id="KW-0805">Transcription regulation</keyword>
<keyword id="KW-0862">Zinc</keyword>
<keyword id="KW-0863">Zinc-finger</keyword>
<gene>
    <name type="primary">GATA1</name>
    <name type="synonym">ERYF1</name>
</gene>
<feature type="chain" id="PRO_0000083400" description="Erythroid transcription factor">
    <location>
        <begin position="1"/>
        <end position="304"/>
    </location>
</feature>
<feature type="zinc finger region" description="GATA-type 1" evidence="3">
    <location>
        <begin position="110"/>
        <end position="134"/>
    </location>
</feature>
<feature type="zinc finger region" description="GATA-type 2" evidence="3">
    <location>
        <begin position="164"/>
        <end position="188"/>
    </location>
</feature>
<feature type="region of interest" description="Disordered" evidence="4">
    <location>
        <begin position="77"/>
        <end position="100"/>
    </location>
</feature>
<feature type="region of interest" description="Disordered" evidence="4">
    <location>
        <begin position="202"/>
        <end position="262"/>
    </location>
</feature>
<feature type="compositionally biased region" description="Basic residues" evidence="4">
    <location>
        <begin position="211"/>
        <end position="224"/>
    </location>
</feature>
<feature type="compositionally biased region" description="Gly residues" evidence="4">
    <location>
        <begin position="225"/>
        <end position="245"/>
    </location>
</feature>
<feature type="compositionally biased region" description="Pro residues" evidence="4">
    <location>
        <begin position="247"/>
        <end position="258"/>
    </location>
</feature>
<feature type="modified residue" description="N6-acetyllysine; by EP300" evidence="6">
    <location>
        <position position="151"/>
    </location>
</feature>
<feature type="modified residue" description="N6-acetyllysine; by EP300" evidence="6">
    <location>
        <position position="152"/>
    </location>
</feature>
<feature type="modified residue" description="N6-acetyllysine; by EP300" evidence="5">
    <location>
        <position position="158"/>
    </location>
</feature>
<feature type="modified residue" description="N6-acetyllysine; by EP300" evidence="5">
    <location>
        <position position="214"/>
    </location>
</feature>
<feature type="modified residue" description="N6-acetyllysine; by EP300" evidence="5">
    <location>
        <position position="218"/>
    </location>
</feature>
<feature type="modified residue" description="N6-acetyllysine; by EP300" evidence="5">
    <location>
        <position position="220"/>
    </location>
</feature>
<feature type="mutagenesis site" description="Reduces acetylation and activation by EP300." evidence="5">
    <original>KK</original>
    <variation>RR</variation>
    <location>
        <begin position="151"/>
        <end position="152"/>
    </location>
</feature>
<feature type="mutagenesis site" description="Reduces acetylation and activation by EP300." evidence="5">
    <original>K</original>
    <variation>R</variation>
    <location>
        <position position="158"/>
    </location>
</feature>
<feature type="turn" evidence="7">
    <location>
        <begin position="165"/>
        <end position="167"/>
    </location>
</feature>
<feature type="strand" evidence="7">
    <location>
        <begin position="173"/>
        <end position="178"/>
    </location>
</feature>
<feature type="turn" evidence="7">
    <location>
        <begin position="179"/>
        <end position="181"/>
    </location>
</feature>
<feature type="strand" evidence="7">
    <location>
        <begin position="182"/>
        <end position="185"/>
    </location>
</feature>
<feature type="helix" evidence="7">
    <location>
        <begin position="186"/>
        <end position="195"/>
    </location>
</feature>
<feature type="helix" evidence="7">
    <location>
        <begin position="201"/>
        <end position="203"/>
    </location>
</feature>
<proteinExistence type="evidence at protein level"/>
<name>GATA1_CHICK</name>
<comment type="function">
    <text evidence="2">Transcriptional activator or repressor which serves as a general switch factor for erythroid development. It binds to DNA sites with the consensus sequence 5'-[AT]GATA[AG]-3' within regulatory regions of globin genes and of other genes expressed in erythroid cells.</text>
</comment>
<comment type="subunit">
    <text evidence="5">Interacts with EP300; the interaction enhances transcriptional activity as a direct result of acetylation.</text>
</comment>
<comment type="subcellular location">
    <subcellularLocation>
        <location evidence="2">Nucleus</location>
    </subcellularLocation>
</comment>
<comment type="tissue specificity">
    <text>Erythrocytes.</text>
</comment>
<comment type="domain">
    <text evidence="1">The two fingers are functionally distinct and cooperate to achieve specific, stable DNA binding. The first finger is necessary only for full specificity and stability of binding, whereas the second one is required for binding (By similarity).</text>
</comment>
<comment type="PTM">
    <text evidence="5">Acetylated on Lys-158, Lys-214, Lys-218 and Lys-220 by EP300. Acetylation increases DNA binding and stimulates transcriptional activity.</text>
</comment>
<reference key="1">
    <citation type="journal article" date="1989" name="Cell">
        <title>The erythroid-specific transcription factor Eryf1: a new finger protein.</title>
        <authorList>
            <person name="Evans T."/>
            <person name="Felsenfeld G."/>
        </authorList>
    </citation>
    <scope>NUCLEOTIDE SEQUENCE [MRNA]</scope>
</reference>
<reference key="2">
    <citation type="journal article" date="1990" name="Genes Dev.">
        <title>Activity and tissue-specific expression of the transcription factor NF-E1 multigene family.</title>
        <authorList>
            <person name="Yamamoto M."/>
            <person name="Ko L.J."/>
            <person name="Leonard M.W."/>
            <person name="Beug H."/>
            <person name="Orkin S.H."/>
            <person name="Engel J.D."/>
        </authorList>
    </citation>
    <scope>NUCLEOTIDE SEQUENCE [MRNA]</scope>
</reference>
<reference key="3">
    <citation type="journal article" date="1998" name="Nature">
        <title>Regulation of activity of the transcription factor GATA-1 by acetylation.</title>
        <authorList>
            <person name="Boyes J."/>
            <person name="Byfield P."/>
            <person name="Nakatani Y."/>
            <person name="Ogryzko V."/>
        </authorList>
    </citation>
    <scope>INTERACTION WITH EP300</scope>
    <scope>ACETYLATION AT LYS-151; LYS-152; LYS-158; LYS-214; LYS-218 AND LYS-220</scope>
    <scope>MUTAGENESIS OF 151-LYS-LYS-152 AND LYS-158</scope>
</reference>
<reference key="4">
    <citation type="journal article" date="1993" name="Science">
        <title>NMR structure of a specific DNA complex of Zn-containing DNA binding domain of GATA-1.</title>
        <authorList>
            <person name="Omichinski J.G."/>
            <person name="Clore G.M."/>
            <person name="Schaad O."/>
            <person name="Felsenfeld G."/>
            <person name="Trainor C."/>
            <person name="Appella E."/>
            <person name="Stahl S.J."/>
            <person name="Gronenborn A.M."/>
        </authorList>
    </citation>
    <scope>STRUCTURE BY NMR OF 158-223</scope>
</reference>
<reference key="5">
    <citation type="journal article" date="1997" name="Nat. Struct. Biol.">
        <title>Use of dipolar 1H-15N and 1H-13C couplings in the structure determination of magnetically oriented macromolecules in solution.</title>
        <authorList>
            <person name="Tjandra N."/>
            <person name="Omichinski J.G."/>
            <person name="Gronenborn A.M."/>
            <person name="Clore G.M."/>
            <person name="Bax A."/>
        </authorList>
    </citation>
    <scope>STRUCTURE BY NMR OF 158-223</scope>
</reference>
<organism>
    <name type="scientific">Gallus gallus</name>
    <name type="common">Chicken</name>
    <dbReference type="NCBI Taxonomy" id="9031"/>
    <lineage>
        <taxon>Eukaryota</taxon>
        <taxon>Metazoa</taxon>
        <taxon>Chordata</taxon>
        <taxon>Craniata</taxon>
        <taxon>Vertebrata</taxon>
        <taxon>Euteleostomi</taxon>
        <taxon>Archelosauria</taxon>
        <taxon>Archosauria</taxon>
        <taxon>Dinosauria</taxon>
        <taxon>Saurischia</taxon>
        <taxon>Theropoda</taxon>
        <taxon>Coelurosauria</taxon>
        <taxon>Aves</taxon>
        <taxon>Neognathae</taxon>
        <taxon>Galloanserae</taxon>
        <taxon>Galliformes</taxon>
        <taxon>Phasianidae</taxon>
        <taxon>Phasianinae</taxon>
        <taxon>Gallus</taxon>
    </lineage>
</organism>
<dbReference type="EMBL" id="M26209">
    <property type="protein sequence ID" value="AAA49055.1"/>
    <property type="molecule type" value="mRNA"/>
</dbReference>
<dbReference type="PIR" id="A32993">
    <property type="entry name" value="A32993"/>
</dbReference>
<dbReference type="RefSeq" id="NP_990795.1">
    <property type="nucleotide sequence ID" value="NM_205464.1"/>
</dbReference>
<dbReference type="PDB" id="1GAT">
    <property type="method" value="NMR"/>
    <property type="chains" value="A=158-217"/>
</dbReference>
<dbReference type="PDB" id="1GAU">
    <property type="method" value="NMR"/>
    <property type="chains" value="A=158-217"/>
</dbReference>
<dbReference type="PDB" id="2GAT">
    <property type="method" value="NMR"/>
    <property type="chains" value="A=158-223"/>
</dbReference>
<dbReference type="PDB" id="3GAT">
    <property type="method" value="NMR"/>
    <property type="chains" value="A=158-223"/>
</dbReference>
<dbReference type="PDBsum" id="1GAT"/>
<dbReference type="PDBsum" id="1GAU"/>
<dbReference type="PDBsum" id="2GAT"/>
<dbReference type="PDBsum" id="3GAT"/>
<dbReference type="SMR" id="P17678"/>
<dbReference type="BioGRID" id="676699">
    <property type="interactions" value="3"/>
</dbReference>
<dbReference type="iPTMnet" id="P17678"/>
<dbReference type="GeneID" id="107050548"/>
<dbReference type="CTD" id="2623"/>
<dbReference type="VEuPathDB" id="HostDB:geneid_416018"/>
<dbReference type="InParanoid" id="P17678"/>
<dbReference type="OrthoDB" id="6516750at2759"/>
<dbReference type="EvolutionaryTrace" id="P17678"/>
<dbReference type="PRO" id="PR:P17678"/>
<dbReference type="Proteomes" id="UP000000539">
    <property type="component" value="Unassembled WGS sequence"/>
</dbReference>
<dbReference type="GO" id="GO:0005634">
    <property type="term" value="C:nucleus"/>
    <property type="evidence" value="ECO:0000318"/>
    <property type="project" value="GO_Central"/>
</dbReference>
<dbReference type="GO" id="GO:0000981">
    <property type="term" value="F:DNA-binding transcription factor activity, RNA polymerase II-specific"/>
    <property type="evidence" value="ECO:0000318"/>
    <property type="project" value="GO_Central"/>
</dbReference>
<dbReference type="GO" id="GO:0000978">
    <property type="term" value="F:RNA polymerase II cis-regulatory region sequence-specific DNA binding"/>
    <property type="evidence" value="ECO:0000318"/>
    <property type="project" value="GO_Central"/>
</dbReference>
<dbReference type="GO" id="GO:0001223">
    <property type="term" value="F:transcription coactivator binding"/>
    <property type="evidence" value="ECO:0000353"/>
    <property type="project" value="BHF-UCL"/>
</dbReference>
<dbReference type="GO" id="GO:0008270">
    <property type="term" value="F:zinc ion binding"/>
    <property type="evidence" value="ECO:0007669"/>
    <property type="project" value="UniProtKB-KW"/>
</dbReference>
<dbReference type="GO" id="GO:0045165">
    <property type="term" value="P:cell fate commitment"/>
    <property type="evidence" value="ECO:0000318"/>
    <property type="project" value="GO_Central"/>
</dbReference>
<dbReference type="GO" id="GO:0000122">
    <property type="term" value="P:negative regulation of transcription by RNA polymerase II"/>
    <property type="evidence" value="ECO:0000318"/>
    <property type="project" value="GO_Central"/>
</dbReference>
<dbReference type="GO" id="GO:0045944">
    <property type="term" value="P:positive regulation of transcription by RNA polymerase II"/>
    <property type="evidence" value="ECO:0000318"/>
    <property type="project" value="GO_Central"/>
</dbReference>
<dbReference type="CDD" id="cd00202">
    <property type="entry name" value="ZnF_GATA"/>
    <property type="match status" value="2"/>
</dbReference>
<dbReference type="FunFam" id="3.30.50.10:FF:000001">
    <property type="entry name" value="GATA transcription factor (GATAd)"/>
    <property type="match status" value="1"/>
</dbReference>
<dbReference type="FunFam" id="3.30.50.10:FF:000032">
    <property type="entry name" value="Transcription factor GATA-3"/>
    <property type="match status" value="1"/>
</dbReference>
<dbReference type="Gene3D" id="3.30.50.10">
    <property type="entry name" value="Erythroid Transcription Factor GATA-1, subunit A"/>
    <property type="match status" value="2"/>
</dbReference>
<dbReference type="InterPro" id="IPR039355">
    <property type="entry name" value="Transcription_factor_GATA"/>
</dbReference>
<dbReference type="InterPro" id="IPR000679">
    <property type="entry name" value="Znf_GATA"/>
</dbReference>
<dbReference type="InterPro" id="IPR013088">
    <property type="entry name" value="Znf_NHR/GATA"/>
</dbReference>
<dbReference type="PANTHER" id="PTHR10071:SF190">
    <property type="entry name" value="ERYTHROID TRANSCRIPTION FACTOR"/>
    <property type="match status" value="1"/>
</dbReference>
<dbReference type="PANTHER" id="PTHR10071">
    <property type="entry name" value="TRANSCRIPTION FACTOR GATA FAMILY MEMBER"/>
    <property type="match status" value="1"/>
</dbReference>
<dbReference type="Pfam" id="PF00320">
    <property type="entry name" value="GATA"/>
    <property type="match status" value="2"/>
</dbReference>
<dbReference type="PRINTS" id="PR00619">
    <property type="entry name" value="GATAZNFINGER"/>
</dbReference>
<dbReference type="SMART" id="SM00401">
    <property type="entry name" value="ZnF_GATA"/>
    <property type="match status" value="2"/>
</dbReference>
<dbReference type="SUPFAM" id="SSF57716">
    <property type="entry name" value="Glucocorticoid receptor-like (DNA-binding domain)"/>
    <property type="match status" value="2"/>
</dbReference>
<dbReference type="PROSITE" id="PS00344">
    <property type="entry name" value="GATA_ZN_FINGER_1"/>
    <property type="match status" value="2"/>
</dbReference>
<dbReference type="PROSITE" id="PS50114">
    <property type="entry name" value="GATA_ZN_FINGER_2"/>
    <property type="match status" value="2"/>
</dbReference>
<sequence>MEFVALGGPDAGSPTPFPDEAGAFLGLGGGERTEAGGLLASYPPSGRVSLVPWADTGTLGTPQWVPPATQMEPPHYLELLQPPRGSPPHPSSGPLLPLSSGPPPCEARECVNCGATATPLWRRDGTGHYLCNACGLYHRLNGQNRPLIRPKKRLLVSKRAGTVCSNCQTSTTTLWRRSPMGDPVCNACGLYYKLHQVNRPLTMRKDGIQTRNRKVSSKGKKRRPPGGGNPSATAGGGAPMGGGGDPSMPPPPPPPAAAPPQSDALYALGPVVLSGHFLPFGNSGGFFGGGAGGYTAPPGLSPQI</sequence>
<protein>
    <recommendedName>
        <fullName>Erythroid transcription factor</fullName>
    </recommendedName>
    <alternativeName>
        <fullName>Eryf1</fullName>
    </alternativeName>
    <alternativeName>
        <fullName>GATA-binding factor 1</fullName>
        <shortName>GATA-1</shortName>
    </alternativeName>
    <alternativeName>
        <fullName>NF-E1 DNA-binding protein</fullName>
        <shortName>NF-E1a</shortName>
    </alternativeName>
</protein>